<name>ADOK_MYCTA</name>
<sequence length="324" mass="34472">MTIAVTGSIATDHLMRFPGRFSEQLLPEHLHKVSLSFLVDDLVMHRGGVAGNMAFAIGVLGGEVALVGAAGADFADYRDWLKARGVNCDHVLISETAHTARFTCTTDVDMAQIASFYPGAMSEARNIKLADVVSAIGKPELVIIGANDPEAMFLHTEECRKLGLAFAADPSQQLARLSGEEIRRLVNGAAYLFTNDYEWDLLLSKTGWSEADVMAQIDLRVTTLGPKGVDLVEPDGTTIHVGVVPETSQTDPTGVGDAFRAGFLTGRSAGLGLERSAQLGSLVAVLVLESTGTQEWQWDYEAAASRLAGAYGEHAAAEIVAVLA</sequence>
<keyword id="KW-0067">ATP-binding</keyword>
<keyword id="KW-0903">Direct protein sequencing</keyword>
<keyword id="KW-0418">Kinase</keyword>
<keyword id="KW-0460">Magnesium</keyword>
<keyword id="KW-0547">Nucleotide-binding</keyword>
<keyword id="KW-0660">Purine salvage</keyword>
<keyword id="KW-1185">Reference proteome</keyword>
<keyword id="KW-0808">Transferase</keyword>
<evidence type="ECO:0000250" key="1">
    <source>
        <dbReference type="UniProtKB" id="P9WID5"/>
    </source>
</evidence>
<evidence type="ECO:0000269" key="2">
    <source>
    </source>
</evidence>
<evidence type="ECO:0000303" key="3">
    <source>
    </source>
</evidence>
<evidence type="ECO:0000305" key="4"/>
<evidence type="ECO:0000305" key="5">
    <source>
    </source>
</evidence>
<reference key="1">
    <citation type="journal article" date="2008" name="PLoS ONE">
        <title>Genetic basis of virulence attenuation revealed by comparative genomic analysis of Mycobacterium tuberculosis strain H37Ra versus H37Rv.</title>
        <authorList>
            <person name="Zheng H."/>
            <person name="Lu L."/>
            <person name="Wang B."/>
            <person name="Pu S."/>
            <person name="Zhang X."/>
            <person name="Zhu G."/>
            <person name="Shi W."/>
            <person name="Zhang L."/>
            <person name="Wang H."/>
            <person name="Wang S."/>
            <person name="Zhao G."/>
            <person name="Zhang Y."/>
        </authorList>
    </citation>
    <scope>NUCLEOTIDE SEQUENCE [LARGE SCALE GENOMIC DNA]</scope>
    <source>
        <strain>ATCC 25177 / H37Ra</strain>
    </source>
</reference>
<reference key="2">
    <citation type="journal article" date="2003" name="J. Bacteriol.">
        <title>Identification and characterization of a unique adenosine kinase from Mycobacterium tuberculosis.</title>
        <authorList>
            <person name="Long M.C."/>
            <person name="Escuyer V."/>
            <person name="Parker W.B."/>
        </authorList>
    </citation>
    <scope>PROTEIN SEQUENCE OF 2-16</scope>
    <scope>FUNCTION</scope>
    <scope>CATALYTIC ACTIVITY</scope>
    <scope>COFACTOR</scope>
    <scope>BIOPHYSICOCHEMICAL PROPERTIES</scope>
    <scope>SUBSTRATE SPECIFICITY</scope>
    <scope>SUBUNIT</scope>
    <scope>ACTIVITY REGULATION</scope>
    <scope>PATHWAY</scope>
    <source>
        <strain>ATCC 25177 / H37Ra</strain>
    </source>
</reference>
<organism>
    <name type="scientific">Mycobacterium tuberculosis (strain ATCC 25177 / H37Ra)</name>
    <dbReference type="NCBI Taxonomy" id="419947"/>
    <lineage>
        <taxon>Bacteria</taxon>
        <taxon>Bacillati</taxon>
        <taxon>Actinomycetota</taxon>
        <taxon>Actinomycetes</taxon>
        <taxon>Mycobacteriales</taxon>
        <taxon>Mycobacteriaceae</taxon>
        <taxon>Mycobacterium</taxon>
        <taxon>Mycobacterium tuberculosis complex</taxon>
    </lineage>
</organism>
<proteinExistence type="evidence at protein level"/>
<accession>A5U4N0</accession>
<protein>
    <recommendedName>
        <fullName evidence="3">Adenosine kinase</fullName>
        <shortName evidence="1">ADK</shortName>
        <shortName evidence="3">AK</shortName>
        <ecNumber evidence="2">2.7.1.20</ecNumber>
    </recommendedName>
</protein>
<comment type="function">
    <text evidence="2">Catalyzes the phosphorylation of adenosine to adenosine monophosphate (AMP). Can also catalyze the phosphorylation of the adenosine analog 2-methyladenosine (methyl-Ado) to methyl-AMP, the first step in the metabolism of this compound to an active form that displays antitubercular activity. Is not active on guanosine, inosine, deoxyadenosine, cytidine, uridine, or thymidine. Prefers dGTP and GTP to ATP as phosphate donors in vitro.</text>
</comment>
<comment type="catalytic activity">
    <reaction evidence="2">
        <text>adenosine + ATP = AMP + ADP + H(+)</text>
        <dbReference type="Rhea" id="RHEA:20824"/>
        <dbReference type="ChEBI" id="CHEBI:15378"/>
        <dbReference type="ChEBI" id="CHEBI:16335"/>
        <dbReference type="ChEBI" id="CHEBI:30616"/>
        <dbReference type="ChEBI" id="CHEBI:456215"/>
        <dbReference type="ChEBI" id="CHEBI:456216"/>
        <dbReference type="EC" id="2.7.1.20"/>
    </reaction>
</comment>
<comment type="catalytic activity">
    <reaction evidence="2">
        <text>adenosine + GTP = GDP + AMP + H(+)</text>
        <dbReference type="Rhea" id="RHEA:52532"/>
        <dbReference type="ChEBI" id="CHEBI:15378"/>
        <dbReference type="ChEBI" id="CHEBI:16335"/>
        <dbReference type="ChEBI" id="CHEBI:37565"/>
        <dbReference type="ChEBI" id="CHEBI:58189"/>
        <dbReference type="ChEBI" id="CHEBI:456215"/>
    </reaction>
</comment>
<comment type="catalytic activity">
    <reaction evidence="2">
        <text>dGTP + adenosine = dGDP + AMP + H(+)</text>
        <dbReference type="Rhea" id="RHEA:52536"/>
        <dbReference type="ChEBI" id="CHEBI:15378"/>
        <dbReference type="ChEBI" id="CHEBI:16335"/>
        <dbReference type="ChEBI" id="CHEBI:58595"/>
        <dbReference type="ChEBI" id="CHEBI:61429"/>
        <dbReference type="ChEBI" id="CHEBI:456215"/>
    </reaction>
</comment>
<comment type="cofactor">
    <cofactor evidence="2">
        <name>Mg(2+)</name>
        <dbReference type="ChEBI" id="CHEBI:18420"/>
    </cofactor>
</comment>
<comment type="activity regulation">
    <text evidence="2">The enzyme is subject to substrate inhibition by adenosine and is competitively inhibited by the adenosine analog iodotubercidin. Unlike other adenosine kinases it is not stimulated by inorganic phosphate. Activity is stimulated in the presence of potassium, resulting in a 13- and 300-fold increase in the catalytic efficiency with adenosine and methyl-Ado as substrate, respectively; the stimulatory effects are not observed in the presence of NaCl or LiCl.</text>
</comment>
<comment type="biophysicochemical properties">
    <kinetics>
        <KM evidence="2">0.8 uM for adenosine (in the presence of 10 mM KCl)</KM>
        <KM evidence="2">3.4 uM for adenosine (in the absence of KCl)</KM>
        <KM evidence="2">79 uM for methyl-adenosine (in the presence of 10 mM KCl)</KM>
        <KM evidence="2">709 uM for methyl-adenosine (in the absence of KCl)</KM>
        <KM evidence="2">1100 uM for ATP (in the presence of 10 mM KCl)</KM>
        <Vmax evidence="2">180.0 nmol/min/mg enzyme with adenosine as substrate (in the presence of 10 mM KCl)</Vmax>
        <Vmax evidence="2">60.0 nmol/min/mg enzyme with adenosine as substrate (in the absence of KCl)</Vmax>
        <Vmax evidence="2">72.0 nmol/min/mg enzyme with methyl-adenosine as substrate (in the presence of 10 mM KCl)</Vmax>
        <Vmax evidence="2">2.3 nmol/min/mg enzyme with methyl-adenosine as substrate (in the absence of KCl)</Vmax>
        <text evidence="2">GTP and dGTP are the best phosphate donors, with 2.5 and 4.7 times the activity observed with ATP, respectively. UTP, dATP, and dTTP exhibit about 33% of the activity observed with ATP, while CTP and dCTP are the worst phosphate donors, with 1.7 and 0.2% of the activity observed with ATP, respectively. Since K(+) exists at millimolar levels within cells, stimulation by K(+) is physiologically relevant, and kinetic values obtained in the presence of K(+) more closely reflect the true physiological state of the enzyme than values obtained in the absence of K(+).</text>
    </kinetics>
    <phDependence>
        <text evidence="2">Optimum pH is 8-11. Activity decreases rapidly at values above pH 11 and below pH 8. Is inactive at pH 4.3.</text>
    </phDependence>
</comment>
<comment type="pathway">
    <text evidence="5">Purine metabolism; AMP biosynthesis via salvage pathway; AMP from adenosine: step 1/1.</text>
</comment>
<comment type="subunit">
    <text evidence="2">Homodimer.</text>
</comment>
<comment type="similarity">
    <text evidence="4">Belongs to the carbohydrate kinase PfkB family.</text>
</comment>
<dbReference type="EC" id="2.7.1.20" evidence="2"/>
<dbReference type="EMBL" id="CP000611">
    <property type="protein sequence ID" value="ABQ73980.1"/>
    <property type="molecule type" value="Genomic_DNA"/>
</dbReference>
<dbReference type="RefSeq" id="WP_003411414.1">
    <property type="nucleotide sequence ID" value="NZ_CP016972.1"/>
</dbReference>
<dbReference type="SMR" id="A5U4N0"/>
<dbReference type="ChEMBL" id="CHEMBL4523106"/>
<dbReference type="KEGG" id="mra:MRA_2218"/>
<dbReference type="eggNOG" id="COG0524">
    <property type="taxonomic scope" value="Bacteria"/>
</dbReference>
<dbReference type="HOGENOM" id="CLU_027634_5_2_11"/>
<dbReference type="BRENDA" id="2.7.1.20">
    <property type="organism ID" value="3445"/>
</dbReference>
<dbReference type="SABIO-RK" id="A5U4N0"/>
<dbReference type="UniPathway" id="UPA00588">
    <property type="reaction ID" value="UER00659"/>
</dbReference>
<dbReference type="Proteomes" id="UP000001988">
    <property type="component" value="Chromosome"/>
</dbReference>
<dbReference type="GO" id="GO:0004001">
    <property type="term" value="F:adenosine kinase activity"/>
    <property type="evidence" value="ECO:0007669"/>
    <property type="project" value="UniProtKB-EC"/>
</dbReference>
<dbReference type="GO" id="GO:0005524">
    <property type="term" value="F:ATP binding"/>
    <property type="evidence" value="ECO:0007669"/>
    <property type="project" value="UniProtKB-KW"/>
</dbReference>
<dbReference type="GO" id="GO:0044209">
    <property type="term" value="P:AMP salvage"/>
    <property type="evidence" value="ECO:0007669"/>
    <property type="project" value="UniProtKB-UniPathway"/>
</dbReference>
<dbReference type="GO" id="GO:0006166">
    <property type="term" value="P:purine ribonucleoside salvage"/>
    <property type="evidence" value="ECO:0007669"/>
    <property type="project" value="UniProtKB-KW"/>
</dbReference>
<dbReference type="CDD" id="cd01942">
    <property type="entry name" value="ribokinase_group_A"/>
    <property type="match status" value="1"/>
</dbReference>
<dbReference type="FunFam" id="3.40.1190.20:FF:000046">
    <property type="entry name" value="Adenosine kinase"/>
    <property type="match status" value="1"/>
</dbReference>
<dbReference type="Gene3D" id="3.40.1190.20">
    <property type="match status" value="1"/>
</dbReference>
<dbReference type="InterPro" id="IPR002173">
    <property type="entry name" value="Carboh/pur_kinase_PfkB_CS"/>
</dbReference>
<dbReference type="InterPro" id="IPR050306">
    <property type="entry name" value="PfkB_Carbo_kinase"/>
</dbReference>
<dbReference type="InterPro" id="IPR011611">
    <property type="entry name" value="PfkB_dom"/>
</dbReference>
<dbReference type="InterPro" id="IPR029056">
    <property type="entry name" value="Ribokinase-like"/>
</dbReference>
<dbReference type="PANTHER" id="PTHR43085:SF46">
    <property type="entry name" value="ADENOSINE KINASE"/>
    <property type="match status" value="1"/>
</dbReference>
<dbReference type="PANTHER" id="PTHR43085">
    <property type="entry name" value="HEXOKINASE FAMILY MEMBER"/>
    <property type="match status" value="1"/>
</dbReference>
<dbReference type="Pfam" id="PF00294">
    <property type="entry name" value="PfkB"/>
    <property type="match status" value="1"/>
</dbReference>
<dbReference type="SUPFAM" id="SSF53613">
    <property type="entry name" value="Ribokinase-like"/>
    <property type="match status" value="1"/>
</dbReference>
<dbReference type="PROSITE" id="PS00583">
    <property type="entry name" value="PFKB_KINASES_1"/>
    <property type="match status" value="1"/>
</dbReference>
<feature type="initiator methionine" description="Removed" evidence="2">
    <location>
        <position position="1"/>
    </location>
</feature>
<feature type="chain" id="PRO_0000306417" description="Adenosine kinase">
    <location>
        <begin position="2"/>
        <end position="324"/>
    </location>
</feature>
<feature type="active site" description="Proton acceptor" evidence="1">
    <location>
        <position position="257"/>
    </location>
</feature>
<feature type="binding site" description="in other chain" evidence="1">
    <location>
        <position position="8"/>
    </location>
    <ligand>
        <name>substrate</name>
        <note>ligand shared between dimeric partners</note>
    </ligand>
</feature>
<feature type="binding site" description="in other chain" evidence="1">
    <location>
        <position position="12"/>
    </location>
    <ligand>
        <name>substrate</name>
        <note>ligand shared between dimeric partners</note>
    </ligand>
</feature>
<feature type="binding site" evidence="1">
    <location>
        <position position="36"/>
    </location>
    <ligand>
        <name>substrate</name>
        <note>ligand shared between dimeric partners</note>
    </ligand>
</feature>
<feature type="binding site" description="in other chain" evidence="1">
    <location>
        <position position="48"/>
    </location>
    <ligand>
        <name>substrate</name>
        <note>ligand shared between dimeric partners</note>
    </ligand>
</feature>
<feature type="binding site" description="in other chain" evidence="1">
    <location>
        <position position="52"/>
    </location>
    <ligand>
        <name>substrate</name>
        <note>ligand shared between dimeric partners</note>
    </ligand>
</feature>
<feature type="binding site" description="in other chain" evidence="1">
    <location>
        <position position="102"/>
    </location>
    <ligand>
        <name>substrate</name>
        <note>ligand shared between dimeric partners</note>
    </ligand>
</feature>
<feature type="binding site" description="in other chain" evidence="1">
    <location>
        <position position="116"/>
    </location>
    <ligand>
        <name>substrate</name>
        <note>ligand shared between dimeric partners</note>
    </ligand>
</feature>
<feature type="binding site" description="in other chain" evidence="1">
    <location>
        <begin position="172"/>
        <end position="173"/>
    </location>
    <ligand>
        <name>substrate</name>
        <note>ligand shared between dimeric partners</note>
    </ligand>
</feature>
<feature type="binding site" evidence="1">
    <location>
        <position position="195"/>
    </location>
    <ligand>
        <name>ATP</name>
        <dbReference type="ChEBI" id="CHEBI:30616"/>
    </ligand>
</feature>
<feature type="binding site" evidence="1">
    <location>
        <begin position="223"/>
        <end position="228"/>
    </location>
    <ligand>
        <name>ATP</name>
        <dbReference type="ChEBI" id="CHEBI:30616"/>
    </ligand>
</feature>
<feature type="binding site" evidence="1">
    <location>
        <position position="256"/>
    </location>
    <ligand>
        <name>ATP</name>
        <dbReference type="ChEBI" id="CHEBI:30616"/>
    </ligand>
</feature>
<feature type="binding site" description="in other chain" evidence="1">
    <location>
        <position position="257"/>
    </location>
    <ligand>
        <name>substrate</name>
        <note>ligand shared between dimeric partners</note>
    </ligand>
</feature>
<gene>
    <name evidence="3" type="primary">adoK</name>
    <name type="synonym">cbhK</name>
    <name type="ordered locus">MRA_2218</name>
</gene>